<dbReference type="EC" id="2.5.1.78" evidence="1"/>
<dbReference type="EMBL" id="AP007255">
    <property type="protein sequence ID" value="BAE51149.1"/>
    <property type="molecule type" value="Genomic_DNA"/>
</dbReference>
<dbReference type="RefSeq" id="WP_011384742.1">
    <property type="nucleotide sequence ID" value="NC_007626.1"/>
</dbReference>
<dbReference type="SMR" id="Q2W4S6"/>
<dbReference type="STRING" id="342108.amb2345"/>
<dbReference type="KEGG" id="mag:amb2345"/>
<dbReference type="HOGENOM" id="CLU_089358_1_2_5"/>
<dbReference type="OrthoDB" id="9809709at2"/>
<dbReference type="UniPathway" id="UPA00275">
    <property type="reaction ID" value="UER00404"/>
</dbReference>
<dbReference type="Proteomes" id="UP000007058">
    <property type="component" value="Chromosome"/>
</dbReference>
<dbReference type="GO" id="GO:0005829">
    <property type="term" value="C:cytosol"/>
    <property type="evidence" value="ECO:0007669"/>
    <property type="project" value="TreeGrafter"/>
</dbReference>
<dbReference type="GO" id="GO:0009349">
    <property type="term" value="C:riboflavin synthase complex"/>
    <property type="evidence" value="ECO:0007669"/>
    <property type="project" value="InterPro"/>
</dbReference>
<dbReference type="GO" id="GO:0000906">
    <property type="term" value="F:6,7-dimethyl-8-ribityllumazine synthase activity"/>
    <property type="evidence" value="ECO:0007669"/>
    <property type="project" value="UniProtKB-UniRule"/>
</dbReference>
<dbReference type="GO" id="GO:0009231">
    <property type="term" value="P:riboflavin biosynthetic process"/>
    <property type="evidence" value="ECO:0007669"/>
    <property type="project" value="UniProtKB-UniRule"/>
</dbReference>
<dbReference type="CDD" id="cd09209">
    <property type="entry name" value="Lumazine_synthase-I"/>
    <property type="match status" value="1"/>
</dbReference>
<dbReference type="Gene3D" id="3.40.50.960">
    <property type="entry name" value="Lumazine/riboflavin synthase"/>
    <property type="match status" value="1"/>
</dbReference>
<dbReference type="HAMAP" id="MF_00178">
    <property type="entry name" value="Lumazine_synth"/>
    <property type="match status" value="1"/>
</dbReference>
<dbReference type="InterPro" id="IPR034964">
    <property type="entry name" value="LS"/>
</dbReference>
<dbReference type="InterPro" id="IPR002180">
    <property type="entry name" value="LS/RS"/>
</dbReference>
<dbReference type="InterPro" id="IPR036467">
    <property type="entry name" value="LS/RS_sf"/>
</dbReference>
<dbReference type="NCBIfam" id="TIGR00114">
    <property type="entry name" value="lumazine-synth"/>
    <property type="match status" value="1"/>
</dbReference>
<dbReference type="PANTHER" id="PTHR21058:SF0">
    <property type="entry name" value="6,7-DIMETHYL-8-RIBITYLLUMAZINE SYNTHASE"/>
    <property type="match status" value="1"/>
</dbReference>
<dbReference type="PANTHER" id="PTHR21058">
    <property type="entry name" value="6,7-DIMETHYL-8-RIBITYLLUMAZINE SYNTHASE DMRL SYNTHASE LUMAZINE SYNTHASE"/>
    <property type="match status" value="1"/>
</dbReference>
<dbReference type="Pfam" id="PF00885">
    <property type="entry name" value="DMRL_synthase"/>
    <property type="match status" value="1"/>
</dbReference>
<dbReference type="SUPFAM" id="SSF52121">
    <property type="entry name" value="Lumazine synthase"/>
    <property type="match status" value="1"/>
</dbReference>
<feature type="chain" id="PRO_1000040443" description="6,7-dimethyl-8-ribityllumazine synthase">
    <location>
        <begin position="1"/>
        <end position="150"/>
    </location>
</feature>
<feature type="active site" description="Proton donor" evidence="1">
    <location>
        <position position="81"/>
    </location>
</feature>
<feature type="binding site" evidence="1">
    <location>
        <position position="11"/>
    </location>
    <ligand>
        <name>5-amino-6-(D-ribitylamino)uracil</name>
        <dbReference type="ChEBI" id="CHEBI:15934"/>
    </ligand>
</feature>
<feature type="binding site" evidence="1">
    <location>
        <begin position="42"/>
        <end position="44"/>
    </location>
    <ligand>
        <name>5-amino-6-(D-ribitylamino)uracil</name>
        <dbReference type="ChEBI" id="CHEBI:15934"/>
    </ligand>
</feature>
<feature type="binding site" evidence="1">
    <location>
        <begin position="73"/>
        <end position="75"/>
    </location>
    <ligand>
        <name>5-amino-6-(D-ribitylamino)uracil</name>
        <dbReference type="ChEBI" id="CHEBI:15934"/>
    </ligand>
</feature>
<feature type="binding site" evidence="1">
    <location>
        <begin position="78"/>
        <end position="79"/>
    </location>
    <ligand>
        <name>(2S)-2-hydroxy-3-oxobutyl phosphate</name>
        <dbReference type="ChEBI" id="CHEBI:58830"/>
    </ligand>
</feature>
<feature type="binding site" evidence="1">
    <location>
        <position position="106"/>
    </location>
    <ligand>
        <name>5-amino-6-(D-ribitylamino)uracil</name>
        <dbReference type="ChEBI" id="CHEBI:15934"/>
    </ligand>
</feature>
<feature type="binding site" evidence="1">
    <location>
        <position position="120"/>
    </location>
    <ligand>
        <name>(2S)-2-hydroxy-3-oxobutyl phosphate</name>
        <dbReference type="ChEBI" id="CHEBI:58830"/>
    </ligand>
</feature>
<keyword id="KW-0686">Riboflavin biosynthesis</keyword>
<keyword id="KW-0808">Transferase</keyword>
<name>RISB_PARM1</name>
<organism>
    <name type="scientific">Paramagnetospirillum magneticum (strain ATCC 700264 / AMB-1)</name>
    <name type="common">Magnetospirillum magneticum</name>
    <dbReference type="NCBI Taxonomy" id="342108"/>
    <lineage>
        <taxon>Bacteria</taxon>
        <taxon>Pseudomonadati</taxon>
        <taxon>Pseudomonadota</taxon>
        <taxon>Alphaproteobacteria</taxon>
        <taxon>Rhodospirillales</taxon>
        <taxon>Magnetospirillaceae</taxon>
        <taxon>Paramagnetospirillum</taxon>
    </lineage>
</organism>
<protein>
    <recommendedName>
        <fullName evidence="1">6,7-dimethyl-8-ribityllumazine synthase</fullName>
        <shortName evidence="1">DMRL synthase</shortName>
        <shortName evidence="1">LS</shortName>
        <shortName evidence="1">Lumazine synthase</shortName>
        <ecNumber evidence="1">2.5.1.78</ecNumber>
    </recommendedName>
</protein>
<reference key="1">
    <citation type="journal article" date="2005" name="DNA Res.">
        <title>Complete genome sequence of the facultative anaerobic magnetotactic bacterium Magnetospirillum sp. strain AMB-1.</title>
        <authorList>
            <person name="Matsunaga T."/>
            <person name="Okamura Y."/>
            <person name="Fukuda Y."/>
            <person name="Wahyudi A.T."/>
            <person name="Murase Y."/>
            <person name="Takeyama H."/>
        </authorList>
    </citation>
    <scope>NUCLEOTIDE SEQUENCE [LARGE SCALE GENOMIC DNA]</scope>
    <source>
        <strain>ATCC 700264 / AMB-1</strain>
    </source>
</reference>
<gene>
    <name evidence="1" type="primary">ribH</name>
    <name type="ordered locus">amb2345</name>
</gene>
<accession>Q2W4S6</accession>
<sequence>MAKVLIIEARFYDHIADGLLAGARAEFDKAGVAHDLLVVPGIFELPAALKLVLTAAEQGNDKARYDGFVTLGCAIRGESDHYHHVGTECMRGIADLSMAYDLALGNGVLTVHNEAQALARSDPARKNLGGQAARACLRMMAVKRELGLSS</sequence>
<proteinExistence type="inferred from homology"/>
<evidence type="ECO:0000255" key="1">
    <source>
        <dbReference type="HAMAP-Rule" id="MF_00178"/>
    </source>
</evidence>
<comment type="function">
    <text evidence="1">Catalyzes the formation of 6,7-dimethyl-8-ribityllumazine by condensation of 5-amino-6-(D-ribitylamino)uracil with 3,4-dihydroxy-2-butanone 4-phosphate. This is the penultimate step in the biosynthesis of riboflavin.</text>
</comment>
<comment type="catalytic activity">
    <reaction evidence="1">
        <text>(2S)-2-hydroxy-3-oxobutyl phosphate + 5-amino-6-(D-ribitylamino)uracil = 6,7-dimethyl-8-(1-D-ribityl)lumazine + phosphate + 2 H2O + H(+)</text>
        <dbReference type="Rhea" id="RHEA:26152"/>
        <dbReference type="ChEBI" id="CHEBI:15377"/>
        <dbReference type="ChEBI" id="CHEBI:15378"/>
        <dbReference type="ChEBI" id="CHEBI:15934"/>
        <dbReference type="ChEBI" id="CHEBI:43474"/>
        <dbReference type="ChEBI" id="CHEBI:58201"/>
        <dbReference type="ChEBI" id="CHEBI:58830"/>
        <dbReference type="EC" id="2.5.1.78"/>
    </reaction>
</comment>
<comment type="pathway">
    <text evidence="1">Cofactor biosynthesis; riboflavin biosynthesis; riboflavin from 2-hydroxy-3-oxobutyl phosphate and 5-amino-6-(D-ribitylamino)uracil: step 1/2.</text>
</comment>
<comment type="similarity">
    <text evidence="1">Belongs to the DMRL synthase family.</text>
</comment>